<proteinExistence type="inferred from homology"/>
<gene>
    <name type="primary">mdh</name>
    <name type="ordered locus">NP_0498A</name>
</gene>
<evidence type="ECO:0000250" key="1">
    <source>
        <dbReference type="UniProtKB" id="O08349"/>
    </source>
</evidence>
<evidence type="ECO:0000250" key="2">
    <source>
        <dbReference type="UniProtKB" id="P61889"/>
    </source>
</evidence>
<evidence type="ECO:0000305" key="3"/>
<organism>
    <name type="scientific">Natronomonas pharaonis (strain ATCC 35678 / DSM 2160 / CIP 103997 / JCM 8858 / NBRC 14720 / NCIMB 2260 / Gabara)</name>
    <name type="common">Halobacterium pharaonis</name>
    <dbReference type="NCBI Taxonomy" id="348780"/>
    <lineage>
        <taxon>Archaea</taxon>
        <taxon>Methanobacteriati</taxon>
        <taxon>Methanobacteriota</taxon>
        <taxon>Stenosarchaea group</taxon>
        <taxon>Halobacteria</taxon>
        <taxon>Halobacteriales</taxon>
        <taxon>Haloarculaceae</taxon>
        <taxon>Natronomonas</taxon>
    </lineage>
</organism>
<accession>Q3IU43</accession>
<comment type="function">
    <text evidence="1">Catalyzes the reversible oxidation of malate to oxaloacetate.</text>
</comment>
<comment type="catalytic activity">
    <reaction evidence="1">
        <text>(S)-malate + NAD(+) = oxaloacetate + NADH + H(+)</text>
        <dbReference type="Rhea" id="RHEA:21432"/>
        <dbReference type="ChEBI" id="CHEBI:15378"/>
        <dbReference type="ChEBI" id="CHEBI:15589"/>
        <dbReference type="ChEBI" id="CHEBI:16452"/>
        <dbReference type="ChEBI" id="CHEBI:57540"/>
        <dbReference type="ChEBI" id="CHEBI:57945"/>
        <dbReference type="EC" id="1.1.1.37"/>
    </reaction>
</comment>
<comment type="similarity">
    <text evidence="3">Belongs to the LDH/MDH superfamily.</text>
</comment>
<reference key="1">
    <citation type="journal article" date="2005" name="Genome Res.">
        <title>Living with two extremes: conclusions from the genome sequence of Natronomonas pharaonis.</title>
        <authorList>
            <person name="Falb M."/>
            <person name="Pfeiffer F."/>
            <person name="Palm P."/>
            <person name="Rodewald K."/>
            <person name="Hickmann V."/>
            <person name="Tittor J."/>
            <person name="Oesterhelt D."/>
        </authorList>
    </citation>
    <scope>NUCLEOTIDE SEQUENCE [LARGE SCALE GENOMIC DNA]</scope>
    <source>
        <strain>ATCC 35678 / DSM 2160 / CIP 103997 / JCM 8858 / NBRC 14720 / NCIMB 2260 / Gabara</strain>
    </source>
</reference>
<sequence>MTKVSIIGAAGTVGAAAGYNIALRDIADELVFVDIPDQRETTIGQAADANHGIAYDSNTTVVQGEYEDTAGSDVVVITAGIPRKEGQTRIDLAGDNAPIMEDIGASLDEYNDDYVSITTSNPVDLLNRHLYEAGDRDRHKVIGFGGRLDSARFRYVLSERFDVPVQNVEATILGEHGDAQVPVFSKVRVDGADPEFDGDEKEEILGDLQESAMDVISRKGATQWGPATGVAHMVEAVLNDTGEVLPGSLVLDGEYGYEDTAFGVPVKLGANGIEEVVEWDLDDYESELMDDAAEKLSDQYDKIS</sequence>
<keyword id="KW-0520">NAD</keyword>
<keyword id="KW-0560">Oxidoreductase</keyword>
<keyword id="KW-1185">Reference proteome</keyword>
<keyword id="KW-0816">Tricarboxylic acid cycle</keyword>
<name>MDH_NATPD</name>
<protein>
    <recommendedName>
        <fullName evidence="1">Malate dehydrogenase</fullName>
        <ecNumber evidence="1">1.1.1.37</ecNumber>
    </recommendedName>
</protein>
<dbReference type="EC" id="1.1.1.37" evidence="1"/>
<dbReference type="EMBL" id="CR936257">
    <property type="protein sequence ID" value="CAI48340.1"/>
    <property type="molecule type" value="Genomic_DNA"/>
</dbReference>
<dbReference type="RefSeq" id="WP_011321976.1">
    <property type="nucleotide sequence ID" value="NC_007426.1"/>
</dbReference>
<dbReference type="SMR" id="Q3IU43"/>
<dbReference type="STRING" id="348780.NP_0498A"/>
<dbReference type="EnsemblBacteria" id="CAI48340">
    <property type="protein sequence ID" value="CAI48340"/>
    <property type="gene ID" value="NP_0498A"/>
</dbReference>
<dbReference type="GeneID" id="3702903"/>
<dbReference type="KEGG" id="nph:NP_0498A"/>
<dbReference type="eggNOG" id="arCOG00246">
    <property type="taxonomic scope" value="Archaea"/>
</dbReference>
<dbReference type="HOGENOM" id="CLU_045401_1_1_2"/>
<dbReference type="OrthoDB" id="2596at2157"/>
<dbReference type="Proteomes" id="UP000002698">
    <property type="component" value="Chromosome"/>
</dbReference>
<dbReference type="GO" id="GO:0004459">
    <property type="term" value="F:L-lactate dehydrogenase activity"/>
    <property type="evidence" value="ECO:0007669"/>
    <property type="project" value="TreeGrafter"/>
</dbReference>
<dbReference type="GO" id="GO:0030060">
    <property type="term" value="F:L-malate dehydrogenase (NAD+) activity"/>
    <property type="evidence" value="ECO:0007669"/>
    <property type="project" value="UniProtKB-EC"/>
</dbReference>
<dbReference type="GO" id="GO:0006089">
    <property type="term" value="P:lactate metabolic process"/>
    <property type="evidence" value="ECO:0007669"/>
    <property type="project" value="TreeGrafter"/>
</dbReference>
<dbReference type="GO" id="GO:0006099">
    <property type="term" value="P:tricarboxylic acid cycle"/>
    <property type="evidence" value="ECO:0007669"/>
    <property type="project" value="UniProtKB-KW"/>
</dbReference>
<dbReference type="Gene3D" id="3.90.110.10">
    <property type="entry name" value="Lactate dehydrogenase/glycoside hydrolase, family 4, C-terminal"/>
    <property type="match status" value="1"/>
</dbReference>
<dbReference type="Gene3D" id="3.40.50.720">
    <property type="entry name" value="NAD(P)-binding Rossmann-like Domain"/>
    <property type="match status" value="1"/>
</dbReference>
<dbReference type="InterPro" id="IPR001557">
    <property type="entry name" value="L-lactate/malate_DH"/>
</dbReference>
<dbReference type="InterPro" id="IPR022383">
    <property type="entry name" value="Lactate/malate_DH_C"/>
</dbReference>
<dbReference type="InterPro" id="IPR001236">
    <property type="entry name" value="Lactate/malate_DH_N"/>
</dbReference>
<dbReference type="InterPro" id="IPR015955">
    <property type="entry name" value="Lactate_DH/Glyco_Ohase_4_C"/>
</dbReference>
<dbReference type="InterPro" id="IPR053411">
    <property type="entry name" value="MDH"/>
</dbReference>
<dbReference type="InterPro" id="IPR036291">
    <property type="entry name" value="NAD(P)-bd_dom_sf"/>
</dbReference>
<dbReference type="NCBIfam" id="NF041314">
    <property type="entry name" value="Malate_DH_Halo"/>
    <property type="match status" value="1"/>
</dbReference>
<dbReference type="NCBIfam" id="NF004863">
    <property type="entry name" value="PRK06223.1"/>
    <property type="match status" value="1"/>
</dbReference>
<dbReference type="PANTHER" id="PTHR43128">
    <property type="entry name" value="L-2-HYDROXYCARBOXYLATE DEHYDROGENASE (NAD(P)(+))"/>
    <property type="match status" value="1"/>
</dbReference>
<dbReference type="PANTHER" id="PTHR43128:SF16">
    <property type="entry name" value="L-LACTATE DEHYDROGENASE"/>
    <property type="match status" value="1"/>
</dbReference>
<dbReference type="Pfam" id="PF02866">
    <property type="entry name" value="Ldh_1_C"/>
    <property type="match status" value="1"/>
</dbReference>
<dbReference type="Pfam" id="PF00056">
    <property type="entry name" value="Ldh_1_N"/>
    <property type="match status" value="1"/>
</dbReference>
<dbReference type="PIRSF" id="PIRSF000102">
    <property type="entry name" value="Lac_mal_DH"/>
    <property type="match status" value="1"/>
</dbReference>
<dbReference type="PRINTS" id="PR00086">
    <property type="entry name" value="LLDHDRGNASE"/>
</dbReference>
<dbReference type="SUPFAM" id="SSF56327">
    <property type="entry name" value="LDH C-terminal domain-like"/>
    <property type="match status" value="1"/>
</dbReference>
<dbReference type="SUPFAM" id="SSF51735">
    <property type="entry name" value="NAD(P)-binding Rossmann-fold domains"/>
    <property type="match status" value="1"/>
</dbReference>
<feature type="chain" id="PRO_0000241972" description="Malate dehydrogenase">
    <location>
        <begin position="1"/>
        <end position="304"/>
    </location>
</feature>
<feature type="active site" description="Proton acceptor" evidence="2">
    <location>
        <position position="176"/>
    </location>
</feature>
<feature type="binding site" evidence="1">
    <location>
        <begin position="8"/>
        <end position="14"/>
    </location>
    <ligand>
        <name>NAD(+)</name>
        <dbReference type="ChEBI" id="CHEBI:57540"/>
    </ligand>
</feature>
<feature type="binding site" evidence="1">
    <location>
        <position position="34"/>
    </location>
    <ligand>
        <name>NAD(+)</name>
        <dbReference type="ChEBI" id="CHEBI:57540"/>
    </ligand>
</feature>
<feature type="binding site" evidence="2">
    <location>
        <position position="83"/>
    </location>
    <ligand>
        <name>substrate</name>
    </ligand>
</feature>
<feature type="binding site" evidence="2">
    <location>
        <position position="89"/>
    </location>
    <ligand>
        <name>substrate</name>
    </ligand>
</feature>
<feature type="binding site" evidence="1">
    <location>
        <position position="96"/>
    </location>
    <ligand>
        <name>NAD(+)</name>
        <dbReference type="ChEBI" id="CHEBI:57540"/>
    </ligand>
</feature>
<feature type="binding site" evidence="1">
    <location>
        <begin position="119"/>
        <end position="121"/>
    </location>
    <ligand>
        <name>NAD(+)</name>
        <dbReference type="ChEBI" id="CHEBI:57540"/>
    </ligand>
</feature>
<feature type="binding site" evidence="2">
    <location>
        <position position="121"/>
    </location>
    <ligand>
        <name>substrate</name>
    </ligand>
</feature>
<feature type="binding site" evidence="2">
    <location>
        <position position="152"/>
    </location>
    <ligand>
        <name>substrate</name>
    </ligand>
</feature>